<name>CYB_SCHPO</name>
<sequence>MKILKSNPFLALANNYMIDAPEPSNISYFWNFGSLLACVLVIQIVIGILLACFYIPNMDLAFLSVERIVRDVNYGFLLRAFHANGASFFFIFLYLHIGRGLYYGSYKYPRTMTWNIGVIIFLLTIITAFLGYCLPANQMSFWGATVITNLLSAVPFIGDDLVHLLWGGFSVSNPTLNRFFSLHYLMPFVIAALSVMHLIALHTNGSSNPLGVTANMDRIPMNPYYLIKDLITIFIFLIGINYMAFYNPYGFMEPDCALPADPLKTPMSIVPEWYLLPFYAILRAIPNFQLGVIAMLLSILVLLLLPLLDFSAIRGNSFNPFGKFFFWTFVADFVILAWIGGSHPENVFITIGAIATIFYFSYFFILIPVYTILGNTLIDLNLSSIKR</sequence>
<gene>
    <name type="primary">cob</name>
    <name type="synonym">cytb</name>
    <name type="ORF">SPMIT.05</name>
</gene>
<evidence type="ECO:0000250" key="1"/>
<evidence type="ECO:0000250" key="2">
    <source>
        <dbReference type="UniProtKB" id="P00157"/>
    </source>
</evidence>
<evidence type="ECO:0000250" key="3">
    <source>
        <dbReference type="UniProtKB" id="P00163"/>
    </source>
</evidence>
<evidence type="ECO:0000255" key="4">
    <source>
        <dbReference type="PROSITE-ProRule" id="PRU00967"/>
    </source>
</evidence>
<evidence type="ECO:0000255" key="5">
    <source>
        <dbReference type="PROSITE-ProRule" id="PRU00968"/>
    </source>
</evidence>
<geneLocation type="mitochondrion"/>
<feature type="chain" id="PRO_0000061762" description="Cytochrome b">
    <location>
        <begin position="1"/>
        <end position="387"/>
    </location>
</feature>
<feature type="transmembrane region" description="Helical" evidence="3">
    <location>
        <begin position="32"/>
        <end position="52"/>
    </location>
</feature>
<feature type="transmembrane region" description="Helical" evidence="3">
    <location>
        <begin position="76"/>
        <end position="98"/>
    </location>
</feature>
<feature type="transmembrane region" description="Helical" evidence="3">
    <location>
        <begin position="113"/>
        <end position="133"/>
    </location>
</feature>
<feature type="transmembrane region" description="Helical" evidence="3">
    <location>
        <begin position="179"/>
        <end position="199"/>
    </location>
</feature>
<feature type="transmembrane region" description="Helical" evidence="3">
    <location>
        <begin position="225"/>
        <end position="245"/>
    </location>
</feature>
<feature type="transmembrane region" description="Helical" evidence="3">
    <location>
        <begin position="289"/>
        <end position="309"/>
    </location>
</feature>
<feature type="transmembrane region" description="Helical" evidence="3">
    <location>
        <begin position="321"/>
        <end position="341"/>
    </location>
</feature>
<feature type="transmembrane region" description="Helical" evidence="3">
    <location>
        <begin position="348"/>
        <end position="368"/>
    </location>
</feature>
<feature type="binding site" description="axial binding residue" evidence="5">
    <location>
        <position position="82"/>
    </location>
    <ligand>
        <name>heme b</name>
        <dbReference type="ChEBI" id="CHEBI:60344"/>
        <label>b562</label>
    </ligand>
    <ligandPart>
        <name>Fe</name>
        <dbReference type="ChEBI" id="CHEBI:18248"/>
    </ligandPart>
</feature>
<feature type="binding site" description="axial binding residue" evidence="5">
    <location>
        <position position="96"/>
    </location>
    <ligand>
        <name>heme b</name>
        <dbReference type="ChEBI" id="CHEBI:60344"/>
        <label>b566</label>
    </ligand>
    <ligandPart>
        <name>Fe</name>
        <dbReference type="ChEBI" id="CHEBI:18248"/>
    </ligandPart>
</feature>
<feature type="binding site" description="axial binding residue" evidence="5">
    <location>
        <position position="183"/>
    </location>
    <ligand>
        <name>heme b</name>
        <dbReference type="ChEBI" id="CHEBI:60344"/>
        <label>b562</label>
    </ligand>
    <ligandPart>
        <name>Fe</name>
        <dbReference type="ChEBI" id="CHEBI:18248"/>
    </ligandPart>
</feature>
<feature type="binding site" description="axial binding residue" evidence="5">
    <location>
        <position position="197"/>
    </location>
    <ligand>
        <name>heme b</name>
        <dbReference type="ChEBI" id="CHEBI:60344"/>
        <label>b566</label>
    </ligand>
    <ligandPart>
        <name>Fe</name>
        <dbReference type="ChEBI" id="CHEBI:18248"/>
    </ligandPart>
</feature>
<feature type="binding site" evidence="2">
    <location>
        <position position="202"/>
    </location>
    <ligand>
        <name>a ubiquinone</name>
        <dbReference type="ChEBI" id="CHEBI:16389"/>
    </ligand>
</feature>
<keyword id="KW-0002">3D-structure</keyword>
<keyword id="KW-0249">Electron transport</keyword>
<keyword id="KW-0349">Heme</keyword>
<keyword id="KW-0408">Iron</keyword>
<keyword id="KW-0472">Membrane</keyword>
<keyword id="KW-0479">Metal-binding</keyword>
<keyword id="KW-0496">Mitochondrion</keyword>
<keyword id="KW-0999">Mitochondrion inner membrane</keyword>
<keyword id="KW-1185">Reference proteome</keyword>
<keyword id="KW-0679">Respiratory chain</keyword>
<keyword id="KW-0812">Transmembrane</keyword>
<keyword id="KW-1133">Transmembrane helix</keyword>
<keyword id="KW-0813">Transport</keyword>
<keyword id="KW-0830">Ubiquinone</keyword>
<accession>P05501</accession>
<proteinExistence type="evidence at protein level"/>
<reference key="1">
    <citation type="journal article" date="1985" name="J. Mol. Biol.">
        <title>The mitochondrial genome of the fission yeast Schizosaccharomyces pombe. The cytochrome b gene has an intron closely related to the first two introns in the Saccharomyces cerevisiae cox1 gene.</title>
        <authorList>
            <person name="Lang B.F."/>
            <person name="Ahne F."/>
            <person name="Bonen L."/>
        </authorList>
    </citation>
    <scope>NUCLEOTIDE SEQUENCE [LARGE SCALE GENOMIC DNA]</scope>
    <source>
        <strain>AD7-50</strain>
    </source>
</reference>
<reference key="2">
    <citation type="book" date="1993" name="Genetic Maps (6th edition)">
        <title>The mitochondrial genome of Schizosaccharomyces pombe.</title>
        <editorList>
            <person name="O'Brien S.J."/>
        </editorList>
        <authorList>
            <person name="Lang B.F."/>
        </authorList>
    </citation>
    <scope>NUCLEOTIDE SEQUENCE [LARGE SCALE GENOMIC DNA]</scope>
    <source>
        <strain>AD7-50</strain>
    </source>
</reference>
<organism>
    <name type="scientific">Schizosaccharomyces pombe (strain 972 / ATCC 24843)</name>
    <name type="common">Fission yeast</name>
    <dbReference type="NCBI Taxonomy" id="284812"/>
    <lineage>
        <taxon>Eukaryota</taxon>
        <taxon>Fungi</taxon>
        <taxon>Dikarya</taxon>
        <taxon>Ascomycota</taxon>
        <taxon>Taphrinomycotina</taxon>
        <taxon>Schizosaccharomycetes</taxon>
        <taxon>Schizosaccharomycetales</taxon>
        <taxon>Schizosaccharomycetaceae</taxon>
        <taxon>Schizosaccharomyces</taxon>
    </lineage>
</organism>
<dbReference type="EMBL" id="X02819">
    <property type="protein sequence ID" value="CAA26588.1"/>
    <property type="molecule type" value="Genomic_DNA"/>
</dbReference>
<dbReference type="EMBL" id="X54421">
    <property type="protein sequence ID" value="CAA38287.1"/>
    <property type="status" value="ALT_SEQ"/>
    <property type="molecule type" value="Genomic_DNA"/>
</dbReference>
<dbReference type="RefSeq" id="NP_039502.1">
    <property type="nucleotide sequence ID" value="NC_001326.1"/>
</dbReference>
<dbReference type="PDB" id="8Q1B">
    <property type="method" value="EM"/>
    <property type="resolution" value="3.40 A"/>
    <property type="chains" value="C/N=1-387"/>
</dbReference>
<dbReference type="PDBsum" id="8Q1B"/>
<dbReference type="EMDB" id="EMD-18062"/>
<dbReference type="SMR" id="P05501"/>
<dbReference type="ComplexPortal" id="CPX-9308">
    <property type="entry name" value="Mitochondrial respiratory chain complex III"/>
</dbReference>
<dbReference type="FunCoup" id="P05501">
    <property type="interactions" value="105"/>
</dbReference>
<dbReference type="STRING" id="284812.P05501"/>
<dbReference type="PaxDb" id="4896-SPMIT.05.1"/>
<dbReference type="EnsemblFungi" id="SPMIT.05.1">
    <property type="protein sequence ID" value="SPMIT.05.1:pep"/>
    <property type="gene ID" value="SPMIT.05"/>
</dbReference>
<dbReference type="PomBase" id="SPMIT.05"/>
<dbReference type="VEuPathDB" id="FungiDB:SPMIT.05"/>
<dbReference type="eggNOG" id="KOG4663">
    <property type="taxonomic scope" value="Eukaryota"/>
</dbReference>
<dbReference type="HOGENOM" id="CLU_031114_3_0_1"/>
<dbReference type="InParanoid" id="P05501"/>
<dbReference type="OMA" id="NISAWWN"/>
<dbReference type="PhylomeDB" id="P05501"/>
<dbReference type="Reactome" id="R-SPO-611105">
    <property type="pathway name" value="Respiratory electron transport"/>
</dbReference>
<dbReference type="PRO" id="PR:P05501"/>
<dbReference type="Proteomes" id="UP000002485">
    <property type="component" value="Mitochondrion"/>
</dbReference>
<dbReference type="GO" id="GO:0016020">
    <property type="term" value="C:membrane"/>
    <property type="evidence" value="ECO:0000318"/>
    <property type="project" value="GO_Central"/>
</dbReference>
<dbReference type="GO" id="GO:0005743">
    <property type="term" value="C:mitochondrial inner membrane"/>
    <property type="evidence" value="ECO:0000305"/>
    <property type="project" value="PomBase"/>
</dbReference>
<dbReference type="GO" id="GO:0045275">
    <property type="term" value="C:respiratory chain complex III"/>
    <property type="evidence" value="ECO:0000318"/>
    <property type="project" value="GO_Central"/>
</dbReference>
<dbReference type="GO" id="GO:0046872">
    <property type="term" value="F:metal ion binding"/>
    <property type="evidence" value="ECO:0007669"/>
    <property type="project" value="UniProtKB-KW"/>
</dbReference>
<dbReference type="GO" id="GO:0008121">
    <property type="term" value="F:ubiquinol-cytochrome-c reductase activity"/>
    <property type="evidence" value="ECO:0007669"/>
    <property type="project" value="InterPro"/>
</dbReference>
<dbReference type="GO" id="GO:0006122">
    <property type="term" value="P:mitochondrial electron transport, ubiquinol to cytochrome c"/>
    <property type="evidence" value="ECO:0000318"/>
    <property type="project" value="GO_Central"/>
</dbReference>
<dbReference type="CDD" id="cd00284">
    <property type="entry name" value="Cytochrome_b_N"/>
    <property type="match status" value="1"/>
</dbReference>
<dbReference type="Gene3D" id="1.20.810.10">
    <property type="entry name" value="Cytochrome Bc1 Complex, Chain C"/>
    <property type="match status" value="1"/>
</dbReference>
<dbReference type="InterPro" id="IPR005798">
    <property type="entry name" value="Cyt_b/b6_C"/>
</dbReference>
<dbReference type="InterPro" id="IPR036150">
    <property type="entry name" value="Cyt_b/b6_C_sf"/>
</dbReference>
<dbReference type="InterPro" id="IPR005797">
    <property type="entry name" value="Cyt_b/b6_N"/>
</dbReference>
<dbReference type="InterPro" id="IPR027387">
    <property type="entry name" value="Cytb/b6-like_sf"/>
</dbReference>
<dbReference type="InterPro" id="IPR030689">
    <property type="entry name" value="Cytochrome_b"/>
</dbReference>
<dbReference type="InterPro" id="IPR048259">
    <property type="entry name" value="Cytochrome_b_N_euk/bac"/>
</dbReference>
<dbReference type="InterPro" id="IPR016174">
    <property type="entry name" value="Di-haem_cyt_TM"/>
</dbReference>
<dbReference type="PANTHER" id="PTHR19271">
    <property type="entry name" value="CYTOCHROME B"/>
    <property type="match status" value="1"/>
</dbReference>
<dbReference type="PANTHER" id="PTHR19271:SF16">
    <property type="entry name" value="CYTOCHROME B"/>
    <property type="match status" value="1"/>
</dbReference>
<dbReference type="Pfam" id="PF00032">
    <property type="entry name" value="Cytochrom_B_C"/>
    <property type="match status" value="1"/>
</dbReference>
<dbReference type="Pfam" id="PF00033">
    <property type="entry name" value="Cytochrome_B"/>
    <property type="match status" value="1"/>
</dbReference>
<dbReference type="PIRSF" id="PIRSF038885">
    <property type="entry name" value="COB"/>
    <property type="match status" value="1"/>
</dbReference>
<dbReference type="SUPFAM" id="SSF81648">
    <property type="entry name" value="a domain/subunit of cytochrome bc1 complex (Ubiquinol-cytochrome c reductase)"/>
    <property type="match status" value="1"/>
</dbReference>
<dbReference type="SUPFAM" id="SSF81342">
    <property type="entry name" value="Transmembrane di-heme cytochromes"/>
    <property type="match status" value="1"/>
</dbReference>
<dbReference type="PROSITE" id="PS51003">
    <property type="entry name" value="CYTB_CTER"/>
    <property type="match status" value="1"/>
</dbReference>
<dbReference type="PROSITE" id="PS51002">
    <property type="entry name" value="CYTB_NTER"/>
    <property type="match status" value="1"/>
</dbReference>
<comment type="function">
    <text evidence="3">Component of the ubiquinol-cytochrome c reductase complex (complex III or cytochrome b-c1 complex) that is part of the mitochondrial respiratory chain. The b-c1 complex mediates electron transfer from ubiquinol to cytochrome c. Contributes to the generation of a proton gradient across the mitochondrial membrane that is then used for ATP synthesis.</text>
</comment>
<comment type="cofactor">
    <cofactor evidence="3">
        <name>heme b</name>
        <dbReference type="ChEBI" id="CHEBI:60344"/>
    </cofactor>
    <text evidence="3">Binds 2 heme b groups non-covalently.</text>
</comment>
<comment type="subunit">
    <text evidence="3">Fungal cytochrome b-c1 complex contains 10 subunits; 3 respiratory subunits, 2 core proteins and 5 low-molecular weight proteins. Cytochrome b-c1 complex is a homodimer.</text>
</comment>
<comment type="subcellular location">
    <subcellularLocation>
        <location evidence="3">Mitochondrion inner membrane</location>
        <topology evidence="3">Multi-pass membrane protein</topology>
    </subcellularLocation>
</comment>
<comment type="miscellaneous">
    <text evidence="1">Heme 1 (or BL or b562) is low-potential and absorbs at about 562 nm, and heme 2 (or BH or b566) is high-potential and absorbs at about 566 nm.</text>
</comment>
<comment type="similarity">
    <text evidence="4 5">Belongs to the cytochrome b family.</text>
</comment>
<comment type="caution">
    <text evidence="3">The protein contains only eight transmembrane helices, not nine as predicted by bioinformatics tools.</text>
</comment>
<protein>
    <recommendedName>
        <fullName>Cytochrome b</fullName>
    </recommendedName>
    <alternativeName>
        <fullName>Complex III subunit 3</fullName>
    </alternativeName>
    <alternativeName>
        <fullName>Complex III subunit III</fullName>
    </alternativeName>
    <alternativeName>
        <fullName>Cytochrome b-c1 complex subunit 3</fullName>
    </alternativeName>
    <alternativeName>
        <fullName>Ubiquinol-cytochrome-c reductase complex cytochrome b subunit</fullName>
    </alternativeName>
</protein>